<protein>
    <recommendedName>
        <fullName evidence="1">Adenylosuccinate synthetase</fullName>
        <shortName evidence="1">AMPSase</shortName>
        <shortName evidence="1">AdSS</shortName>
        <ecNumber evidence="1">6.3.4.4</ecNumber>
    </recommendedName>
    <alternativeName>
        <fullName evidence="1">IMP--aspartate ligase</fullName>
    </alternativeName>
</protein>
<comment type="function">
    <text evidence="1">Plays an important role in the de novo pathway of purine nucleotide biosynthesis. Catalyzes the first committed step in the biosynthesis of AMP from IMP.</text>
</comment>
<comment type="catalytic activity">
    <reaction evidence="1">
        <text>IMP + L-aspartate + GTP = N(6)-(1,2-dicarboxyethyl)-AMP + GDP + phosphate + 2 H(+)</text>
        <dbReference type="Rhea" id="RHEA:15753"/>
        <dbReference type="ChEBI" id="CHEBI:15378"/>
        <dbReference type="ChEBI" id="CHEBI:29991"/>
        <dbReference type="ChEBI" id="CHEBI:37565"/>
        <dbReference type="ChEBI" id="CHEBI:43474"/>
        <dbReference type="ChEBI" id="CHEBI:57567"/>
        <dbReference type="ChEBI" id="CHEBI:58053"/>
        <dbReference type="ChEBI" id="CHEBI:58189"/>
        <dbReference type="EC" id="6.3.4.4"/>
    </reaction>
</comment>
<comment type="cofactor">
    <cofactor evidence="1">
        <name>Mg(2+)</name>
        <dbReference type="ChEBI" id="CHEBI:18420"/>
    </cofactor>
    <text evidence="1">Binds 1 Mg(2+) ion per subunit.</text>
</comment>
<comment type="pathway">
    <text evidence="1">Purine metabolism; AMP biosynthesis via de novo pathway; AMP from IMP: step 1/2.</text>
</comment>
<comment type="subunit">
    <text evidence="1">Homodimer.</text>
</comment>
<comment type="subcellular location">
    <subcellularLocation>
        <location evidence="1">Cytoplasm</location>
    </subcellularLocation>
</comment>
<comment type="similarity">
    <text evidence="1">Belongs to the adenylosuccinate synthetase family.</text>
</comment>
<name>PURA_PECCP</name>
<gene>
    <name evidence="1" type="primary">purA</name>
    <name type="ordered locus">PC1_3716</name>
</gene>
<sequence length="432" mass="47061">MGKNVVVLGTQWGDEGKGKVVDLLTERAKYVVRYQGGHNAGHTLVINGEKTVLHLIPSGILRENVVSIIGNGVVLAPDALMKEMTELEARGVPVRERLLLSEACPLILPYHVALDNAREKARGAKAIGTTGRGIGPAYEDKVARRGLRVGDLFDKETFAVKLKEIVEYHNFQLVNYYKADAVDYQKVLDDVLAIADILTAMVVDVSDLLYKAHLRGDFVMFEGAQGTLLDIDHGTYPYVTSSNTTAGGVATGSGLGPRYVDYVLGIVKAYSTRVGAGPFPTELFEEVGEHLSQKGNEFGATTGRRRRTGWLDAVAVRRAVQINSLSGFCLTKLDVLDGLKEIKICVGYRLPNGTEVDTTPLAAEGWEGLEPIYETMPGWSESTFGVKDHSKLPQAALNYIKRIEEVTGVPIDIISTGPDRSETMVLRDPFDA</sequence>
<dbReference type="EC" id="6.3.4.4" evidence="1"/>
<dbReference type="EMBL" id="CP001657">
    <property type="protein sequence ID" value="ACT14731.1"/>
    <property type="molecule type" value="Genomic_DNA"/>
</dbReference>
<dbReference type="RefSeq" id="WP_015841843.1">
    <property type="nucleotide sequence ID" value="NC_012917.1"/>
</dbReference>
<dbReference type="SMR" id="C6DFJ2"/>
<dbReference type="STRING" id="561230.PC1_3716"/>
<dbReference type="KEGG" id="pct:PC1_3716"/>
<dbReference type="eggNOG" id="COG0104">
    <property type="taxonomic scope" value="Bacteria"/>
</dbReference>
<dbReference type="HOGENOM" id="CLU_029848_0_0_6"/>
<dbReference type="OrthoDB" id="9807553at2"/>
<dbReference type="UniPathway" id="UPA00075">
    <property type="reaction ID" value="UER00335"/>
</dbReference>
<dbReference type="Proteomes" id="UP000002736">
    <property type="component" value="Chromosome"/>
</dbReference>
<dbReference type="GO" id="GO:0005737">
    <property type="term" value="C:cytoplasm"/>
    <property type="evidence" value="ECO:0007669"/>
    <property type="project" value="UniProtKB-SubCell"/>
</dbReference>
<dbReference type="GO" id="GO:0004019">
    <property type="term" value="F:adenylosuccinate synthase activity"/>
    <property type="evidence" value="ECO:0007669"/>
    <property type="project" value="UniProtKB-UniRule"/>
</dbReference>
<dbReference type="GO" id="GO:0005525">
    <property type="term" value="F:GTP binding"/>
    <property type="evidence" value="ECO:0007669"/>
    <property type="project" value="UniProtKB-UniRule"/>
</dbReference>
<dbReference type="GO" id="GO:0000287">
    <property type="term" value="F:magnesium ion binding"/>
    <property type="evidence" value="ECO:0007669"/>
    <property type="project" value="UniProtKB-UniRule"/>
</dbReference>
<dbReference type="GO" id="GO:0044208">
    <property type="term" value="P:'de novo' AMP biosynthetic process"/>
    <property type="evidence" value="ECO:0007669"/>
    <property type="project" value="UniProtKB-UniRule"/>
</dbReference>
<dbReference type="GO" id="GO:0046040">
    <property type="term" value="P:IMP metabolic process"/>
    <property type="evidence" value="ECO:0007669"/>
    <property type="project" value="TreeGrafter"/>
</dbReference>
<dbReference type="CDD" id="cd03108">
    <property type="entry name" value="AdSS"/>
    <property type="match status" value="1"/>
</dbReference>
<dbReference type="FunFam" id="1.10.300.10:FF:000001">
    <property type="entry name" value="Adenylosuccinate synthetase"/>
    <property type="match status" value="1"/>
</dbReference>
<dbReference type="FunFam" id="3.90.170.10:FF:000001">
    <property type="entry name" value="Adenylosuccinate synthetase"/>
    <property type="match status" value="1"/>
</dbReference>
<dbReference type="Gene3D" id="3.40.440.10">
    <property type="entry name" value="Adenylosuccinate Synthetase, subunit A, domain 1"/>
    <property type="match status" value="1"/>
</dbReference>
<dbReference type="Gene3D" id="1.10.300.10">
    <property type="entry name" value="Adenylosuccinate Synthetase, subunit A, domain 2"/>
    <property type="match status" value="1"/>
</dbReference>
<dbReference type="Gene3D" id="3.90.170.10">
    <property type="entry name" value="Adenylosuccinate Synthetase, subunit A, domain 3"/>
    <property type="match status" value="1"/>
</dbReference>
<dbReference type="HAMAP" id="MF_00011">
    <property type="entry name" value="Adenylosucc_synth"/>
    <property type="match status" value="1"/>
</dbReference>
<dbReference type="InterPro" id="IPR018220">
    <property type="entry name" value="Adenylosuccin_syn_GTP-bd"/>
</dbReference>
<dbReference type="InterPro" id="IPR033128">
    <property type="entry name" value="Adenylosuccin_syn_Lys_AS"/>
</dbReference>
<dbReference type="InterPro" id="IPR042109">
    <property type="entry name" value="Adenylosuccinate_synth_dom1"/>
</dbReference>
<dbReference type="InterPro" id="IPR042110">
    <property type="entry name" value="Adenylosuccinate_synth_dom2"/>
</dbReference>
<dbReference type="InterPro" id="IPR042111">
    <property type="entry name" value="Adenylosuccinate_synth_dom3"/>
</dbReference>
<dbReference type="InterPro" id="IPR001114">
    <property type="entry name" value="Adenylosuccinate_synthetase"/>
</dbReference>
<dbReference type="InterPro" id="IPR027417">
    <property type="entry name" value="P-loop_NTPase"/>
</dbReference>
<dbReference type="NCBIfam" id="NF002223">
    <property type="entry name" value="PRK01117.1"/>
    <property type="match status" value="1"/>
</dbReference>
<dbReference type="NCBIfam" id="TIGR00184">
    <property type="entry name" value="purA"/>
    <property type="match status" value="1"/>
</dbReference>
<dbReference type="PANTHER" id="PTHR11846">
    <property type="entry name" value="ADENYLOSUCCINATE SYNTHETASE"/>
    <property type="match status" value="1"/>
</dbReference>
<dbReference type="PANTHER" id="PTHR11846:SF0">
    <property type="entry name" value="ADENYLOSUCCINATE SYNTHETASE"/>
    <property type="match status" value="1"/>
</dbReference>
<dbReference type="Pfam" id="PF00709">
    <property type="entry name" value="Adenylsucc_synt"/>
    <property type="match status" value="1"/>
</dbReference>
<dbReference type="SMART" id="SM00788">
    <property type="entry name" value="Adenylsucc_synt"/>
    <property type="match status" value="1"/>
</dbReference>
<dbReference type="SUPFAM" id="SSF52540">
    <property type="entry name" value="P-loop containing nucleoside triphosphate hydrolases"/>
    <property type="match status" value="1"/>
</dbReference>
<dbReference type="PROSITE" id="PS01266">
    <property type="entry name" value="ADENYLOSUCCIN_SYN_1"/>
    <property type="match status" value="1"/>
</dbReference>
<dbReference type="PROSITE" id="PS00513">
    <property type="entry name" value="ADENYLOSUCCIN_SYN_2"/>
    <property type="match status" value="1"/>
</dbReference>
<proteinExistence type="inferred from homology"/>
<evidence type="ECO:0000255" key="1">
    <source>
        <dbReference type="HAMAP-Rule" id="MF_00011"/>
    </source>
</evidence>
<feature type="chain" id="PRO_1000201762" description="Adenylosuccinate synthetase">
    <location>
        <begin position="1"/>
        <end position="432"/>
    </location>
</feature>
<feature type="active site" description="Proton acceptor" evidence="1">
    <location>
        <position position="14"/>
    </location>
</feature>
<feature type="active site" description="Proton donor" evidence="1">
    <location>
        <position position="42"/>
    </location>
</feature>
<feature type="binding site" evidence="1">
    <location>
        <begin position="13"/>
        <end position="19"/>
    </location>
    <ligand>
        <name>GTP</name>
        <dbReference type="ChEBI" id="CHEBI:37565"/>
    </ligand>
</feature>
<feature type="binding site" description="in other chain" evidence="1">
    <location>
        <begin position="14"/>
        <end position="17"/>
    </location>
    <ligand>
        <name>IMP</name>
        <dbReference type="ChEBI" id="CHEBI:58053"/>
        <note>ligand shared between dimeric partners</note>
    </ligand>
</feature>
<feature type="binding site" evidence="1">
    <location>
        <position position="14"/>
    </location>
    <ligand>
        <name>Mg(2+)</name>
        <dbReference type="ChEBI" id="CHEBI:18420"/>
    </ligand>
</feature>
<feature type="binding site" description="in other chain" evidence="1">
    <location>
        <begin position="39"/>
        <end position="42"/>
    </location>
    <ligand>
        <name>IMP</name>
        <dbReference type="ChEBI" id="CHEBI:58053"/>
        <note>ligand shared between dimeric partners</note>
    </ligand>
</feature>
<feature type="binding site" evidence="1">
    <location>
        <begin position="41"/>
        <end position="43"/>
    </location>
    <ligand>
        <name>GTP</name>
        <dbReference type="ChEBI" id="CHEBI:37565"/>
    </ligand>
</feature>
<feature type="binding site" evidence="1">
    <location>
        <position position="41"/>
    </location>
    <ligand>
        <name>Mg(2+)</name>
        <dbReference type="ChEBI" id="CHEBI:18420"/>
    </ligand>
</feature>
<feature type="binding site" description="in other chain" evidence="1">
    <location>
        <position position="130"/>
    </location>
    <ligand>
        <name>IMP</name>
        <dbReference type="ChEBI" id="CHEBI:58053"/>
        <note>ligand shared between dimeric partners</note>
    </ligand>
</feature>
<feature type="binding site" evidence="1">
    <location>
        <position position="144"/>
    </location>
    <ligand>
        <name>IMP</name>
        <dbReference type="ChEBI" id="CHEBI:58053"/>
        <note>ligand shared between dimeric partners</note>
    </ligand>
</feature>
<feature type="binding site" description="in other chain" evidence="1">
    <location>
        <position position="225"/>
    </location>
    <ligand>
        <name>IMP</name>
        <dbReference type="ChEBI" id="CHEBI:58053"/>
        <note>ligand shared between dimeric partners</note>
    </ligand>
</feature>
<feature type="binding site" description="in other chain" evidence="1">
    <location>
        <position position="240"/>
    </location>
    <ligand>
        <name>IMP</name>
        <dbReference type="ChEBI" id="CHEBI:58053"/>
        <note>ligand shared between dimeric partners</note>
    </ligand>
</feature>
<feature type="binding site" evidence="1">
    <location>
        <begin position="300"/>
        <end position="306"/>
    </location>
    <ligand>
        <name>substrate</name>
    </ligand>
</feature>
<feature type="binding site" description="in other chain" evidence="1">
    <location>
        <position position="304"/>
    </location>
    <ligand>
        <name>IMP</name>
        <dbReference type="ChEBI" id="CHEBI:58053"/>
        <note>ligand shared between dimeric partners</note>
    </ligand>
</feature>
<feature type="binding site" evidence="1">
    <location>
        <position position="306"/>
    </location>
    <ligand>
        <name>GTP</name>
        <dbReference type="ChEBI" id="CHEBI:37565"/>
    </ligand>
</feature>
<feature type="binding site" evidence="1">
    <location>
        <begin position="332"/>
        <end position="334"/>
    </location>
    <ligand>
        <name>GTP</name>
        <dbReference type="ChEBI" id="CHEBI:37565"/>
    </ligand>
</feature>
<feature type="binding site" evidence="1">
    <location>
        <begin position="415"/>
        <end position="417"/>
    </location>
    <ligand>
        <name>GTP</name>
        <dbReference type="ChEBI" id="CHEBI:37565"/>
    </ligand>
</feature>
<organism>
    <name type="scientific">Pectobacterium carotovorum subsp. carotovorum (strain PC1)</name>
    <dbReference type="NCBI Taxonomy" id="561230"/>
    <lineage>
        <taxon>Bacteria</taxon>
        <taxon>Pseudomonadati</taxon>
        <taxon>Pseudomonadota</taxon>
        <taxon>Gammaproteobacteria</taxon>
        <taxon>Enterobacterales</taxon>
        <taxon>Pectobacteriaceae</taxon>
        <taxon>Pectobacterium</taxon>
    </lineage>
</organism>
<reference key="1">
    <citation type="submission" date="2009-07" db="EMBL/GenBank/DDBJ databases">
        <title>Complete sequence of Pectobacterium carotovorum subsp. carotovorum PC1.</title>
        <authorList>
            <consortium name="US DOE Joint Genome Institute"/>
            <person name="Lucas S."/>
            <person name="Copeland A."/>
            <person name="Lapidus A."/>
            <person name="Glavina del Rio T."/>
            <person name="Tice H."/>
            <person name="Bruce D."/>
            <person name="Goodwin L."/>
            <person name="Pitluck S."/>
            <person name="Munk A.C."/>
            <person name="Brettin T."/>
            <person name="Detter J.C."/>
            <person name="Han C."/>
            <person name="Tapia R."/>
            <person name="Larimer F."/>
            <person name="Land M."/>
            <person name="Hauser L."/>
            <person name="Kyrpides N."/>
            <person name="Mikhailova N."/>
            <person name="Balakrishnan V."/>
            <person name="Glasner J."/>
            <person name="Perna N.T."/>
        </authorList>
    </citation>
    <scope>NUCLEOTIDE SEQUENCE [LARGE SCALE GENOMIC DNA]</scope>
    <source>
        <strain>PC1</strain>
    </source>
</reference>
<keyword id="KW-0963">Cytoplasm</keyword>
<keyword id="KW-0342">GTP-binding</keyword>
<keyword id="KW-0436">Ligase</keyword>
<keyword id="KW-0460">Magnesium</keyword>
<keyword id="KW-0479">Metal-binding</keyword>
<keyword id="KW-0547">Nucleotide-binding</keyword>
<keyword id="KW-0658">Purine biosynthesis</keyword>
<accession>C6DFJ2</accession>